<dbReference type="EC" id="2.3.2.23"/>
<dbReference type="EMBL" id="AY032592">
    <property type="protein sequence ID" value="AAK50144.1"/>
    <property type="molecule type" value="Genomic_DNA"/>
</dbReference>
<dbReference type="EMBL" id="AACD01000093">
    <property type="protein sequence ID" value="EAA62504.1"/>
    <property type="status" value="ALT_SEQ"/>
    <property type="molecule type" value="Genomic_DNA"/>
</dbReference>
<dbReference type="EMBL" id="BN001305">
    <property type="protein sequence ID" value="CBF82065.1"/>
    <property type="status" value="ALT_SEQ"/>
    <property type="molecule type" value="Genomic_DNA"/>
</dbReference>
<dbReference type="RefSeq" id="XP_662948.1">
    <property type="nucleotide sequence ID" value="XM_657856.1"/>
</dbReference>
<dbReference type="SMR" id="Q96UP5"/>
<dbReference type="FunCoup" id="Q96UP5">
    <property type="interactions" value="796"/>
</dbReference>
<dbReference type="STRING" id="227321.Q96UP5"/>
<dbReference type="HOGENOM" id="CLU_030988_10_3_1"/>
<dbReference type="InParanoid" id="Q96UP5"/>
<dbReference type="UniPathway" id="UPA00143"/>
<dbReference type="Proteomes" id="UP000000560">
    <property type="component" value="Chromosome V"/>
</dbReference>
<dbReference type="GO" id="GO:0005737">
    <property type="term" value="C:cytoplasm"/>
    <property type="evidence" value="ECO:0007669"/>
    <property type="project" value="UniProtKB-SubCell"/>
</dbReference>
<dbReference type="GO" id="GO:0033503">
    <property type="term" value="C:HULC complex"/>
    <property type="evidence" value="ECO:0000318"/>
    <property type="project" value="GO_Central"/>
</dbReference>
<dbReference type="GO" id="GO:0005634">
    <property type="term" value="C:nucleus"/>
    <property type="evidence" value="ECO:0007669"/>
    <property type="project" value="UniProtKB-SubCell"/>
</dbReference>
<dbReference type="GO" id="GO:0005524">
    <property type="term" value="F:ATP binding"/>
    <property type="evidence" value="ECO:0007669"/>
    <property type="project" value="UniProtKB-KW"/>
</dbReference>
<dbReference type="GO" id="GO:0061631">
    <property type="term" value="F:ubiquitin conjugating enzyme activity"/>
    <property type="evidence" value="ECO:0000318"/>
    <property type="project" value="GO_Central"/>
</dbReference>
<dbReference type="GO" id="GO:0006325">
    <property type="term" value="P:chromatin organization"/>
    <property type="evidence" value="ECO:0007669"/>
    <property type="project" value="UniProtKB-KW"/>
</dbReference>
<dbReference type="GO" id="GO:0006281">
    <property type="term" value="P:DNA repair"/>
    <property type="evidence" value="ECO:0000318"/>
    <property type="project" value="GO_Central"/>
</dbReference>
<dbReference type="GO" id="GO:0043161">
    <property type="term" value="P:proteasome-mediated ubiquitin-dependent protein catabolic process"/>
    <property type="evidence" value="ECO:0000318"/>
    <property type="project" value="GO_Central"/>
</dbReference>
<dbReference type="GO" id="GO:0000209">
    <property type="term" value="P:protein polyubiquitination"/>
    <property type="evidence" value="ECO:0000318"/>
    <property type="project" value="GO_Central"/>
</dbReference>
<dbReference type="GO" id="GO:0030435">
    <property type="term" value="P:sporulation resulting in formation of a cellular spore"/>
    <property type="evidence" value="ECO:0007669"/>
    <property type="project" value="UniProtKB-KW"/>
</dbReference>
<dbReference type="CDD" id="cd23790">
    <property type="entry name" value="UBCc_UBE2A_2B"/>
    <property type="match status" value="1"/>
</dbReference>
<dbReference type="FunFam" id="3.10.110.10:FF:000007">
    <property type="entry name" value="Ubiquitin-conjugating enzyme E2 2"/>
    <property type="match status" value="1"/>
</dbReference>
<dbReference type="Gene3D" id="3.10.110.10">
    <property type="entry name" value="Ubiquitin Conjugating Enzyme"/>
    <property type="match status" value="1"/>
</dbReference>
<dbReference type="InterPro" id="IPR050113">
    <property type="entry name" value="Ub_conjugating_enzyme"/>
</dbReference>
<dbReference type="InterPro" id="IPR000608">
    <property type="entry name" value="UBQ-conjugat_E2_core"/>
</dbReference>
<dbReference type="InterPro" id="IPR023313">
    <property type="entry name" value="UBQ-conjugating_AS"/>
</dbReference>
<dbReference type="InterPro" id="IPR016135">
    <property type="entry name" value="UBQ-conjugating_enzyme/RWD"/>
</dbReference>
<dbReference type="PANTHER" id="PTHR24067">
    <property type="entry name" value="UBIQUITIN-CONJUGATING ENZYME E2"/>
    <property type="match status" value="1"/>
</dbReference>
<dbReference type="Pfam" id="PF00179">
    <property type="entry name" value="UQ_con"/>
    <property type="match status" value="1"/>
</dbReference>
<dbReference type="SMART" id="SM00212">
    <property type="entry name" value="UBCc"/>
    <property type="match status" value="1"/>
</dbReference>
<dbReference type="SUPFAM" id="SSF54495">
    <property type="entry name" value="UBC-like"/>
    <property type="match status" value="1"/>
</dbReference>
<dbReference type="PROSITE" id="PS00183">
    <property type="entry name" value="UBC_1"/>
    <property type="match status" value="1"/>
</dbReference>
<dbReference type="PROSITE" id="PS50127">
    <property type="entry name" value="UBC_2"/>
    <property type="match status" value="1"/>
</dbReference>
<protein>
    <recommendedName>
        <fullName>Ubiquitin-conjugating enzyme E2 2</fullName>
        <ecNumber>2.3.2.23</ecNumber>
    </recommendedName>
    <alternativeName>
        <fullName>E2 ubiquitin-conjugating enzyme 2</fullName>
    </alternativeName>
    <alternativeName>
        <fullName>UV sensitivity protein J</fullName>
    </alternativeName>
    <alternativeName>
        <fullName>Ubiquitin carrier protein ubc2</fullName>
    </alternativeName>
    <alternativeName>
        <fullName>Ubiquitin-protein ligase ubc2</fullName>
    </alternativeName>
</protein>
<name>UBC2_EMENI</name>
<accession>Q96UP5</accession>
<accession>C8VGT2</accession>
<accession>Q5B286</accession>
<reference key="1">
    <citation type="submission" date="2001-04" db="EMBL/GenBank/DDBJ databases">
        <title>Mutagenic DNA-repair genes in Aspergillus nidulans: isolation and characterization of a RAD6 homolog gene.</title>
        <authorList>
            <person name="Jang Y.-K."/>
            <person name="Kaefer E."/>
            <person name="Chae S.-K."/>
        </authorList>
    </citation>
    <scope>NUCLEOTIDE SEQUENCE [GENOMIC DNA]</scope>
</reference>
<reference key="2">
    <citation type="journal article" date="2005" name="Nature">
        <title>Sequencing of Aspergillus nidulans and comparative analysis with A. fumigatus and A. oryzae.</title>
        <authorList>
            <person name="Galagan J.E."/>
            <person name="Calvo S.E."/>
            <person name="Cuomo C."/>
            <person name="Ma L.-J."/>
            <person name="Wortman J.R."/>
            <person name="Batzoglou S."/>
            <person name="Lee S.-I."/>
            <person name="Bastuerkmen M."/>
            <person name="Spevak C.C."/>
            <person name="Clutterbuck J."/>
            <person name="Kapitonov V."/>
            <person name="Jurka J."/>
            <person name="Scazzocchio C."/>
            <person name="Farman M.L."/>
            <person name="Butler J."/>
            <person name="Purcell S."/>
            <person name="Harris S."/>
            <person name="Braus G.H."/>
            <person name="Draht O."/>
            <person name="Busch S."/>
            <person name="D'Enfert C."/>
            <person name="Bouchier C."/>
            <person name="Goldman G.H."/>
            <person name="Bell-Pedersen D."/>
            <person name="Griffiths-Jones S."/>
            <person name="Doonan J.H."/>
            <person name="Yu J."/>
            <person name="Vienken K."/>
            <person name="Pain A."/>
            <person name="Freitag M."/>
            <person name="Selker E.U."/>
            <person name="Archer D.B."/>
            <person name="Penalva M.A."/>
            <person name="Oakley B.R."/>
            <person name="Momany M."/>
            <person name="Tanaka T."/>
            <person name="Kumagai T."/>
            <person name="Asai K."/>
            <person name="Machida M."/>
            <person name="Nierman W.C."/>
            <person name="Denning D.W."/>
            <person name="Caddick M.X."/>
            <person name="Hynes M."/>
            <person name="Paoletti M."/>
            <person name="Fischer R."/>
            <person name="Miller B.L."/>
            <person name="Dyer P.S."/>
            <person name="Sachs M.S."/>
            <person name="Osmani S.A."/>
            <person name="Birren B.W."/>
        </authorList>
    </citation>
    <scope>NUCLEOTIDE SEQUENCE [LARGE SCALE GENOMIC DNA]</scope>
    <source>
        <strain>FGSC A4 / ATCC 38163 / CBS 112.46 / NRRL 194 / M139</strain>
    </source>
</reference>
<reference key="3">
    <citation type="journal article" date="2009" name="Fungal Genet. Biol.">
        <title>The 2008 update of the Aspergillus nidulans genome annotation: a community effort.</title>
        <authorList>
            <person name="Wortman J.R."/>
            <person name="Gilsenan J.M."/>
            <person name="Joardar V."/>
            <person name="Deegan J."/>
            <person name="Clutterbuck J."/>
            <person name="Andersen M.R."/>
            <person name="Archer D."/>
            <person name="Bencina M."/>
            <person name="Braus G."/>
            <person name="Coutinho P."/>
            <person name="von Dohren H."/>
            <person name="Doonan J."/>
            <person name="Driessen A.J."/>
            <person name="Durek P."/>
            <person name="Espeso E."/>
            <person name="Fekete E."/>
            <person name="Flipphi M."/>
            <person name="Estrada C.G."/>
            <person name="Geysens S."/>
            <person name="Goldman G."/>
            <person name="de Groot P.W."/>
            <person name="Hansen K."/>
            <person name="Harris S.D."/>
            <person name="Heinekamp T."/>
            <person name="Helmstaedt K."/>
            <person name="Henrissat B."/>
            <person name="Hofmann G."/>
            <person name="Homan T."/>
            <person name="Horio T."/>
            <person name="Horiuchi H."/>
            <person name="James S."/>
            <person name="Jones M."/>
            <person name="Karaffa L."/>
            <person name="Karanyi Z."/>
            <person name="Kato M."/>
            <person name="Keller N."/>
            <person name="Kelly D.E."/>
            <person name="Kiel J.A."/>
            <person name="Kim J.M."/>
            <person name="van der Klei I.J."/>
            <person name="Klis F.M."/>
            <person name="Kovalchuk A."/>
            <person name="Krasevec N."/>
            <person name="Kubicek C.P."/>
            <person name="Liu B."/>
            <person name="Maccabe A."/>
            <person name="Meyer V."/>
            <person name="Mirabito P."/>
            <person name="Miskei M."/>
            <person name="Mos M."/>
            <person name="Mullins J."/>
            <person name="Nelson D.R."/>
            <person name="Nielsen J."/>
            <person name="Oakley B.R."/>
            <person name="Osmani S.A."/>
            <person name="Pakula T."/>
            <person name="Paszewski A."/>
            <person name="Paulsen I."/>
            <person name="Pilsyk S."/>
            <person name="Pocsi I."/>
            <person name="Punt P.J."/>
            <person name="Ram A.F."/>
            <person name="Ren Q."/>
            <person name="Robellet X."/>
            <person name="Robson G."/>
            <person name="Seiboth B."/>
            <person name="van Solingen P."/>
            <person name="Specht T."/>
            <person name="Sun J."/>
            <person name="Taheri-Talesh N."/>
            <person name="Takeshita N."/>
            <person name="Ussery D."/>
            <person name="vanKuyk P.A."/>
            <person name="Visser H."/>
            <person name="van de Vondervoort P.J."/>
            <person name="de Vries R.P."/>
            <person name="Walton J."/>
            <person name="Xiang X."/>
            <person name="Xiong Y."/>
            <person name="Zeng A.P."/>
            <person name="Brandt B.W."/>
            <person name="Cornell M.J."/>
            <person name="van den Hondel C.A."/>
            <person name="Visser J."/>
            <person name="Oliver S.G."/>
            <person name="Turner G."/>
        </authorList>
    </citation>
    <scope>GENOME REANNOTATION</scope>
    <source>
        <strain>FGSC A4 / ATCC 38163 / CBS 112.46 / NRRL 194 / M139</strain>
    </source>
</reference>
<organism>
    <name type="scientific">Emericella nidulans (strain FGSC A4 / ATCC 38163 / CBS 112.46 / NRRL 194 / M139)</name>
    <name type="common">Aspergillus nidulans</name>
    <dbReference type="NCBI Taxonomy" id="227321"/>
    <lineage>
        <taxon>Eukaryota</taxon>
        <taxon>Fungi</taxon>
        <taxon>Dikarya</taxon>
        <taxon>Ascomycota</taxon>
        <taxon>Pezizomycotina</taxon>
        <taxon>Eurotiomycetes</taxon>
        <taxon>Eurotiomycetidae</taxon>
        <taxon>Eurotiales</taxon>
        <taxon>Aspergillaceae</taxon>
        <taxon>Aspergillus</taxon>
        <taxon>Aspergillus subgen. Nidulantes</taxon>
    </lineage>
</organism>
<gene>
    <name type="primary">uvsJ</name>
    <name type="synonym">ubc2</name>
    <name type="ORF">AN5344</name>
</gene>
<feature type="chain" id="PRO_0000082532" description="Ubiquitin-conjugating enzyme E2 2">
    <location>
        <begin position="1"/>
        <end position="151"/>
    </location>
</feature>
<feature type="domain" description="UBC core" evidence="2">
    <location>
        <begin position="4"/>
        <end position="150"/>
    </location>
</feature>
<feature type="region of interest" description="Disordered" evidence="4">
    <location>
        <begin position="1"/>
        <end position="26"/>
    </location>
</feature>
<feature type="active site" description="Glycyl thioester intermediate" evidence="2 3">
    <location>
        <position position="88"/>
    </location>
</feature>
<keyword id="KW-0067">ATP-binding</keyword>
<keyword id="KW-0156">Chromatin regulator</keyword>
<keyword id="KW-0963">Cytoplasm</keyword>
<keyword id="KW-0227">DNA damage</keyword>
<keyword id="KW-0234">DNA repair</keyword>
<keyword id="KW-0547">Nucleotide-binding</keyword>
<keyword id="KW-0539">Nucleus</keyword>
<keyword id="KW-1185">Reference proteome</keyword>
<keyword id="KW-0749">Sporulation</keyword>
<keyword id="KW-0804">Transcription</keyword>
<keyword id="KW-0805">Transcription regulation</keyword>
<keyword id="KW-0808">Transferase</keyword>
<keyword id="KW-0833">Ubl conjugation pathway</keyword>
<proteinExistence type="inferred from homology"/>
<comment type="function">
    <text evidence="2">Catalyzes the covalent attachment of ubiquitin to other proteins. Plays a role in transcription regulation by catalyzing the monoubiquitination of histone H2B to form H2BK123ub1. H2BK123ub1 gives a specific tag for epigenetic transcriptional activation and is also a prerequisite for H3K4me and H3K79me formation. Also involved in postreplication repair of UV-damaged DNA, in N-end rule-dependent protein degradation and in sporulation.</text>
</comment>
<comment type="catalytic activity">
    <reaction evidence="2 3">
        <text>S-ubiquitinyl-[E1 ubiquitin-activating enzyme]-L-cysteine + [E2 ubiquitin-conjugating enzyme]-L-cysteine = [E1 ubiquitin-activating enzyme]-L-cysteine + S-ubiquitinyl-[E2 ubiquitin-conjugating enzyme]-L-cysteine.</text>
        <dbReference type="EC" id="2.3.2.23"/>
    </reaction>
</comment>
<comment type="pathway">
    <text evidence="2">Protein modification; protein ubiquitination.</text>
</comment>
<comment type="subcellular location">
    <subcellularLocation>
        <location evidence="1">Cytoplasm</location>
    </subcellularLocation>
    <subcellularLocation>
        <location evidence="1">Nucleus</location>
    </subcellularLocation>
</comment>
<comment type="similarity">
    <text evidence="2">Belongs to the ubiquitin-conjugating enzyme family.</text>
</comment>
<comment type="sequence caution" evidence="5">
    <conflict type="erroneous gene model prediction">
        <sequence resource="EMBL-CDS" id="CBF82065"/>
    </conflict>
</comment>
<comment type="sequence caution" evidence="5">
    <conflict type="erroneous gene model prediction">
        <sequence resource="EMBL-CDS" id="EAA62504"/>
    </conflict>
</comment>
<evidence type="ECO:0000250" key="1">
    <source>
        <dbReference type="UniProtKB" id="Q5VVX9"/>
    </source>
</evidence>
<evidence type="ECO:0000255" key="2">
    <source>
        <dbReference type="PROSITE-ProRule" id="PRU00388"/>
    </source>
</evidence>
<evidence type="ECO:0000255" key="3">
    <source>
        <dbReference type="PROSITE-ProRule" id="PRU10133"/>
    </source>
</evidence>
<evidence type="ECO:0000256" key="4">
    <source>
        <dbReference type="SAM" id="MobiDB-lite"/>
    </source>
</evidence>
<evidence type="ECO:0000305" key="5"/>
<sequence length="151" mass="17211">MSTSARRRLMRDFKRMQTDPPAGVSASPVADNVMTWNAVIIGPADTPFEDGTFRLVMHFEEQYPNKPPGVKFISQMFHPNVYGTGELCLDILQNRWSPTYDVAAILTSIQSLLNDPNTSSPANVEASNLYRDNRKEYIKRVRETVEKSWEE</sequence>